<protein>
    <recommendedName>
        <fullName evidence="1">UPF0502 protein Patl_1161</fullName>
    </recommendedName>
</protein>
<feature type="chain" id="PRO_0000309400" description="UPF0502 protein Patl_1161">
    <location>
        <begin position="1"/>
        <end position="230"/>
    </location>
</feature>
<dbReference type="EMBL" id="CP000388">
    <property type="protein sequence ID" value="ABG39687.1"/>
    <property type="molecule type" value="Genomic_DNA"/>
</dbReference>
<dbReference type="RefSeq" id="WP_011574021.1">
    <property type="nucleotide sequence ID" value="NC_008228.1"/>
</dbReference>
<dbReference type="SMR" id="Q15WQ1"/>
<dbReference type="STRING" id="342610.Patl_1161"/>
<dbReference type="KEGG" id="pat:Patl_1161"/>
<dbReference type="eggNOG" id="COG3132">
    <property type="taxonomic scope" value="Bacteria"/>
</dbReference>
<dbReference type="HOGENOM" id="CLU_057831_2_0_6"/>
<dbReference type="OrthoDB" id="9784785at2"/>
<dbReference type="Proteomes" id="UP000001981">
    <property type="component" value="Chromosome"/>
</dbReference>
<dbReference type="Gene3D" id="1.10.10.10">
    <property type="entry name" value="Winged helix-like DNA-binding domain superfamily/Winged helix DNA-binding domain"/>
    <property type="match status" value="2"/>
</dbReference>
<dbReference type="HAMAP" id="MF_01584">
    <property type="entry name" value="UPF0502"/>
    <property type="match status" value="1"/>
</dbReference>
<dbReference type="InterPro" id="IPR007432">
    <property type="entry name" value="DUF480"/>
</dbReference>
<dbReference type="InterPro" id="IPR036388">
    <property type="entry name" value="WH-like_DNA-bd_sf"/>
</dbReference>
<dbReference type="InterPro" id="IPR036390">
    <property type="entry name" value="WH_DNA-bd_sf"/>
</dbReference>
<dbReference type="PANTHER" id="PTHR38768">
    <property type="entry name" value="UPF0502 PROTEIN YCEH"/>
    <property type="match status" value="1"/>
</dbReference>
<dbReference type="PANTHER" id="PTHR38768:SF1">
    <property type="entry name" value="UPF0502 PROTEIN YCEH"/>
    <property type="match status" value="1"/>
</dbReference>
<dbReference type="Pfam" id="PF04337">
    <property type="entry name" value="DUF480"/>
    <property type="match status" value="1"/>
</dbReference>
<dbReference type="SUPFAM" id="SSF46785">
    <property type="entry name" value="Winged helix' DNA-binding domain"/>
    <property type="match status" value="2"/>
</dbReference>
<name>Y1161_PSEA6</name>
<accession>Q15WQ1</accession>
<comment type="similarity">
    <text evidence="1">Belongs to the UPF0502 family.</text>
</comment>
<organism>
    <name type="scientific">Pseudoalteromonas atlantica (strain T6c / ATCC BAA-1087)</name>
    <dbReference type="NCBI Taxonomy" id="3042615"/>
    <lineage>
        <taxon>Bacteria</taxon>
        <taxon>Pseudomonadati</taxon>
        <taxon>Pseudomonadota</taxon>
        <taxon>Gammaproteobacteria</taxon>
        <taxon>Alteromonadales</taxon>
        <taxon>Alteromonadaceae</taxon>
        <taxon>Paraglaciecola</taxon>
    </lineage>
</organism>
<proteinExistence type="inferred from homology"/>
<reference key="1">
    <citation type="submission" date="2006-06" db="EMBL/GenBank/DDBJ databases">
        <title>Complete sequence of Pseudoalteromonas atlantica T6c.</title>
        <authorList>
            <consortium name="US DOE Joint Genome Institute"/>
            <person name="Copeland A."/>
            <person name="Lucas S."/>
            <person name="Lapidus A."/>
            <person name="Barry K."/>
            <person name="Detter J.C."/>
            <person name="Glavina del Rio T."/>
            <person name="Hammon N."/>
            <person name="Israni S."/>
            <person name="Dalin E."/>
            <person name="Tice H."/>
            <person name="Pitluck S."/>
            <person name="Saunders E."/>
            <person name="Brettin T."/>
            <person name="Bruce D."/>
            <person name="Han C."/>
            <person name="Tapia R."/>
            <person name="Gilna P."/>
            <person name="Schmutz J."/>
            <person name="Larimer F."/>
            <person name="Land M."/>
            <person name="Hauser L."/>
            <person name="Kyrpides N."/>
            <person name="Kim E."/>
            <person name="Karls A.C."/>
            <person name="Bartlett D."/>
            <person name="Higgins B.P."/>
            <person name="Richardson P."/>
        </authorList>
    </citation>
    <scope>NUCLEOTIDE SEQUENCE [LARGE SCALE GENOMIC DNA]</scope>
    <source>
        <strain>T6c / ATCC BAA-1087</strain>
    </source>
</reference>
<sequence>MLVTLTQSQARVIGVLLEKEVTTPEQYPLSLNSVTTACNQKSNREPVMELTELEVQNTLDELHAKNLIFEQSGSRATRYKHRFCNTEFSDLQLTPQQLAIICVMLLRGPQTPGELRTRAQRMAGFTHVDEVEKALNELMDVNGEQLVVRLEREPGKRESRYAQQFYKDTNEVISHEPAIASKSSQPNASNTTVATNDTAQEARICALEDTVTQLRCELEQLKQTLDELTR</sequence>
<gene>
    <name type="ordered locus">Patl_1161</name>
</gene>
<evidence type="ECO:0000255" key="1">
    <source>
        <dbReference type="HAMAP-Rule" id="MF_01584"/>
    </source>
</evidence>